<organism>
    <name type="scientific">Pyrococcus horikoshii (strain ATCC 700860 / DSM 12428 / JCM 9974 / NBRC 100139 / OT-3)</name>
    <dbReference type="NCBI Taxonomy" id="70601"/>
    <lineage>
        <taxon>Archaea</taxon>
        <taxon>Methanobacteriati</taxon>
        <taxon>Methanobacteriota</taxon>
        <taxon>Thermococci</taxon>
        <taxon>Thermococcales</taxon>
        <taxon>Thermococcaceae</taxon>
        <taxon>Pyrococcus</taxon>
    </lineage>
</organism>
<comment type="sequence caution" evidence="2">
    <conflict type="erroneous initiation">
        <sequence resource="EMBL-CDS" id="BAA29129"/>
    </conflict>
</comment>
<sequence length="148" mass="17242">MRKLDRVDMQLVKILSENSRLTYRELADILNTTRQRIARRIDKLKKLGIIRKFTIIPDIDKLGYMYAIVLIKSKVPSDADKVISEISDIEYVKSVEKGVGRYNIIVRLLLPKDIKDAENLISEFLQRIKNAENVEVILISEVRKFEII</sequence>
<protein>
    <recommendedName>
        <fullName>Uncharacterized HTH-type transcriptional regulator PH0061</fullName>
    </recommendedName>
</protein>
<reference key="1">
    <citation type="journal article" date="1998" name="DNA Res.">
        <title>Complete sequence and gene organization of the genome of a hyper-thermophilic archaebacterium, Pyrococcus horikoshii OT3.</title>
        <authorList>
            <person name="Kawarabayasi Y."/>
            <person name="Sawada M."/>
            <person name="Horikawa H."/>
            <person name="Haikawa Y."/>
            <person name="Hino Y."/>
            <person name="Yamamoto S."/>
            <person name="Sekine M."/>
            <person name="Baba S."/>
            <person name="Kosugi H."/>
            <person name="Hosoyama A."/>
            <person name="Nagai Y."/>
            <person name="Sakai M."/>
            <person name="Ogura K."/>
            <person name="Otsuka R."/>
            <person name="Nakazawa H."/>
            <person name="Takamiya M."/>
            <person name="Ohfuku Y."/>
            <person name="Funahashi T."/>
            <person name="Tanaka T."/>
            <person name="Kudoh Y."/>
            <person name="Yamazaki J."/>
            <person name="Kushida N."/>
            <person name="Oguchi A."/>
            <person name="Aoki K."/>
            <person name="Yoshizawa T."/>
            <person name="Nakamura Y."/>
            <person name="Robb F.T."/>
            <person name="Horikoshi K."/>
            <person name="Masuchi Y."/>
            <person name="Shizuya H."/>
            <person name="Kikuchi H."/>
        </authorList>
    </citation>
    <scope>NUCLEOTIDE SEQUENCE [LARGE SCALE GENOMIC DNA]</scope>
    <source>
        <strain>ATCC 700860 / DSM 12428 / JCM 9974 / NBRC 100139 / OT-3</strain>
    </source>
</reference>
<reference key="2">
    <citation type="submission" date="2006-06" db="PDB data bank">
        <title>Crystal structure of PH0061.</title>
        <authorList>
            <consortium name="RIKEN structural genomics initiative (RSGI)"/>
        </authorList>
    </citation>
    <scope>X-RAY CRYSTALLOGRAPHY (2.0 ANGSTROMS)</scope>
</reference>
<name>REG2_PYRHO</name>
<dbReference type="EMBL" id="BA000001">
    <property type="protein sequence ID" value="BAA29129.1"/>
    <property type="status" value="ALT_INIT"/>
    <property type="molecule type" value="Genomic_DNA"/>
</dbReference>
<dbReference type="PIR" id="B71225">
    <property type="entry name" value="B71225"/>
</dbReference>
<dbReference type="RefSeq" id="WP_048053019.1">
    <property type="nucleotide sequence ID" value="NC_000961.1"/>
</dbReference>
<dbReference type="PDB" id="2DBB">
    <property type="method" value="X-ray"/>
    <property type="resolution" value="2.00 A"/>
    <property type="chains" value="A/B=1-148"/>
</dbReference>
<dbReference type="PDBsum" id="2DBB"/>
<dbReference type="SMR" id="O57802"/>
<dbReference type="STRING" id="70601.gene:9376968"/>
<dbReference type="EnsemblBacteria" id="BAA29129">
    <property type="protein sequence ID" value="BAA29129"/>
    <property type="gene ID" value="BAA29129"/>
</dbReference>
<dbReference type="GeneID" id="1443959"/>
<dbReference type="KEGG" id="pho:PH0061"/>
<dbReference type="eggNOG" id="arCOG01581">
    <property type="taxonomic scope" value="Archaea"/>
</dbReference>
<dbReference type="OrthoDB" id="57033at2157"/>
<dbReference type="EvolutionaryTrace" id="O57802"/>
<dbReference type="Proteomes" id="UP000000752">
    <property type="component" value="Chromosome"/>
</dbReference>
<dbReference type="GO" id="GO:0043565">
    <property type="term" value="F:sequence-specific DNA binding"/>
    <property type="evidence" value="ECO:0007669"/>
    <property type="project" value="InterPro"/>
</dbReference>
<dbReference type="Gene3D" id="3.30.70.920">
    <property type="match status" value="1"/>
</dbReference>
<dbReference type="Gene3D" id="1.10.10.10">
    <property type="entry name" value="Winged helix-like DNA-binding domain superfamily/Winged helix DNA-binding domain"/>
    <property type="match status" value="1"/>
</dbReference>
<dbReference type="InterPro" id="IPR000485">
    <property type="entry name" value="AsnC-type_HTH_dom"/>
</dbReference>
<dbReference type="InterPro" id="IPR011008">
    <property type="entry name" value="Dimeric_a/b-barrel"/>
</dbReference>
<dbReference type="InterPro" id="IPR050684">
    <property type="entry name" value="HTH-Siroheme_Decarb"/>
</dbReference>
<dbReference type="InterPro" id="IPR019888">
    <property type="entry name" value="Tscrpt_reg_AsnC-like"/>
</dbReference>
<dbReference type="InterPro" id="IPR019885">
    <property type="entry name" value="Tscrpt_reg_HTH_AsnC-type_CS"/>
</dbReference>
<dbReference type="InterPro" id="IPR036388">
    <property type="entry name" value="WH-like_DNA-bd_sf"/>
</dbReference>
<dbReference type="InterPro" id="IPR036390">
    <property type="entry name" value="WH_DNA-bd_sf"/>
</dbReference>
<dbReference type="PANTHER" id="PTHR43413:SF7">
    <property type="entry name" value="HTH-TYPE TRANSCRIPTIONAL REGULATOR PTR2"/>
    <property type="match status" value="1"/>
</dbReference>
<dbReference type="PANTHER" id="PTHR43413">
    <property type="entry name" value="TRANSCRIPTIONAL REGULATOR, ASNC FAMILY"/>
    <property type="match status" value="1"/>
</dbReference>
<dbReference type="Pfam" id="PF13412">
    <property type="entry name" value="HTH_24"/>
    <property type="match status" value="1"/>
</dbReference>
<dbReference type="PRINTS" id="PR00033">
    <property type="entry name" value="HTHASNC"/>
</dbReference>
<dbReference type="SMART" id="SM00344">
    <property type="entry name" value="HTH_ASNC"/>
    <property type="match status" value="1"/>
</dbReference>
<dbReference type="SUPFAM" id="SSF54909">
    <property type="entry name" value="Dimeric alpha+beta barrel"/>
    <property type="match status" value="1"/>
</dbReference>
<dbReference type="SUPFAM" id="SSF46785">
    <property type="entry name" value="Winged helix' DNA-binding domain"/>
    <property type="match status" value="1"/>
</dbReference>
<dbReference type="PROSITE" id="PS00519">
    <property type="entry name" value="HTH_ASNC_1"/>
    <property type="match status" value="1"/>
</dbReference>
<dbReference type="PROSITE" id="PS50956">
    <property type="entry name" value="HTH_ASNC_2"/>
    <property type="match status" value="1"/>
</dbReference>
<gene>
    <name type="ordered locus">PH0061</name>
</gene>
<accession>O57802</accession>
<evidence type="ECO:0000255" key="1">
    <source>
        <dbReference type="PROSITE-ProRule" id="PRU00319"/>
    </source>
</evidence>
<evidence type="ECO:0000305" key="2"/>
<evidence type="ECO:0007829" key="3">
    <source>
        <dbReference type="PDB" id="2DBB"/>
    </source>
</evidence>
<feature type="chain" id="PRO_0000111759" description="Uncharacterized HTH-type transcriptional regulator PH0061">
    <location>
        <begin position="1"/>
        <end position="148"/>
    </location>
</feature>
<feature type="domain" description="HTH asnC-type" evidence="1">
    <location>
        <begin position="4"/>
        <end position="65"/>
    </location>
</feature>
<feature type="DNA-binding region" description="H-T-H motif" evidence="1">
    <location>
        <begin position="23"/>
        <end position="42"/>
    </location>
</feature>
<feature type="helix" evidence="3">
    <location>
        <begin position="6"/>
        <end position="17"/>
    </location>
</feature>
<feature type="helix" evidence="3">
    <location>
        <begin position="23"/>
        <end position="29"/>
    </location>
</feature>
<feature type="helix" evidence="3">
    <location>
        <begin position="34"/>
        <end position="46"/>
    </location>
</feature>
<feature type="strand" evidence="3">
    <location>
        <begin position="49"/>
        <end position="57"/>
    </location>
</feature>
<feature type="helix" evidence="3">
    <location>
        <begin position="60"/>
        <end position="62"/>
    </location>
</feature>
<feature type="strand" evidence="3">
    <location>
        <begin position="64"/>
        <end position="75"/>
    </location>
</feature>
<feature type="helix" evidence="3">
    <location>
        <begin position="76"/>
        <end position="86"/>
    </location>
</feature>
<feature type="strand" evidence="3">
    <location>
        <begin position="92"/>
        <end position="101"/>
    </location>
</feature>
<feature type="strand" evidence="3">
    <location>
        <begin position="103"/>
        <end position="113"/>
    </location>
</feature>
<feature type="helix" evidence="3">
    <location>
        <begin position="114"/>
        <end position="126"/>
    </location>
</feature>
<feature type="strand" evidence="3">
    <location>
        <begin position="130"/>
        <end position="145"/>
    </location>
</feature>
<keyword id="KW-0002">3D-structure</keyword>
<keyword id="KW-0238">DNA-binding</keyword>
<keyword id="KW-0804">Transcription</keyword>
<keyword id="KW-0805">Transcription regulation</keyword>
<proteinExistence type="evidence at protein level"/>